<sequence>MGAWKVWTFFAIALVVAVKAYDEEAKCMSHDEDSQVKERQILHIVDSINKPISPDFRAPRGVIDEHKLRGLGTLKKREIFSLFDERNWDEASKVVRLLLDAKDFDDFIDVAEVIRLRVNEELFLYAFSVAVMHRGDTQGLQVPRIHDIFPDKFLKEDVIHRLLELSNRGEHYDRIPIIDATQISHNYLDPNSELEYFLEDLGLNSHHHHWHVIHPAIWVSELGNEKDRKGEFFYWMHHQMLARYEAERMSNGLARTRTFQNWNDPIDEGYAPHISIMKTGYTYAYRPPGYTLRDLPNLPKNKMVEWAKRVLYSIHSGIFHFSNGTDAHLDTEHGIDELGNIVESSLTSLNRDYYGNLHCYAHVIAGRIADPEGKYGEDNGVMYDVATSARDPLFYRWHKYIDNIFQEYKNTLPPYTTEELTPQNSEFRVQGISVVGETSARDTVHTYWQHSLLKVGQGFEFTKHTPAYVKVKHLQHESFTYVIDVENRGRTRTGFFRIFAAPKYNELGQKWHINDQRLIMVEMDKFIEKLYPGKNTIERHSEDSTVTMSSASIFSDISSEQSEDHCSCGWPDYLLVPKGNFEGFPMEVFVIVTDYEEDKVEGPDEGCACHDALTYCGGIDYHFPDKRAMGFPFDRPIKQRNFNAFKTKNMGKVTVDVKFTGETIAPEDFHNQH</sequence>
<protein>
    <recommendedName>
        <fullName>Hemocyanin subunit C</fullName>
    </recommendedName>
</protein>
<evidence type="ECO:0000250" key="1">
    <source>
        <dbReference type="UniProtKB" id="P10787"/>
    </source>
</evidence>
<evidence type="ECO:0000255" key="2"/>
<evidence type="ECO:0000269" key="3">
    <source>
    </source>
</evidence>
<evidence type="ECO:0000305" key="4"/>
<evidence type="ECO:0000312" key="5">
    <source>
        <dbReference type="EMBL" id="CAD24086.1"/>
    </source>
</evidence>
<keyword id="KW-0186">Copper</keyword>
<keyword id="KW-1015">Disulfide bond</keyword>
<keyword id="KW-0325">Glycoprotein</keyword>
<keyword id="KW-0479">Metal-binding</keyword>
<keyword id="KW-0561">Oxygen transport</keyword>
<keyword id="KW-0964">Secreted</keyword>
<keyword id="KW-0732">Signal</keyword>
<keyword id="KW-0813">Transport</keyword>
<feature type="signal peptide" evidence="2">
    <location>
        <begin position="1"/>
        <end position="20"/>
    </location>
</feature>
<feature type="chain" id="PRO_0000013347" description="Hemocyanin subunit C">
    <location>
        <begin position="21"/>
        <end position="673"/>
    </location>
</feature>
<feature type="binding site" evidence="1">
    <location>
        <position position="207"/>
    </location>
    <ligand>
        <name>Cu cation</name>
        <dbReference type="ChEBI" id="CHEBI:23378"/>
        <label>A</label>
    </ligand>
</feature>
<feature type="binding site" evidence="1">
    <location>
        <position position="211"/>
    </location>
    <ligand>
        <name>Cu cation</name>
        <dbReference type="ChEBI" id="CHEBI:23378"/>
        <label>A</label>
    </ligand>
</feature>
<feature type="binding site" evidence="1">
    <location>
        <position position="237"/>
    </location>
    <ligand>
        <name>Cu cation</name>
        <dbReference type="ChEBI" id="CHEBI:23378"/>
        <label>A</label>
    </ligand>
</feature>
<feature type="binding site" evidence="1">
    <location>
        <position position="358"/>
    </location>
    <ligand>
        <name>Cu cation</name>
        <dbReference type="ChEBI" id="CHEBI:23378"/>
        <label>B</label>
    </ligand>
</feature>
<feature type="binding site" evidence="1">
    <location>
        <position position="362"/>
    </location>
    <ligand>
        <name>Cu cation</name>
        <dbReference type="ChEBI" id="CHEBI:23378"/>
        <label>B</label>
    </ligand>
</feature>
<feature type="binding site" evidence="1">
    <location>
        <position position="398"/>
    </location>
    <ligand>
        <name>Cu cation</name>
        <dbReference type="ChEBI" id="CHEBI:23378"/>
        <label>B</label>
    </ligand>
</feature>
<feature type="glycosylation site" description="N-linked (GlcNAc...) asparagine" evidence="4">
    <location>
        <position position="323"/>
    </location>
</feature>
<feature type="disulfide bond" evidence="1">
    <location>
        <begin position="568"/>
        <end position="616"/>
    </location>
</feature>
<accession>Q8T115</accession>
<comment type="function">
    <text evidence="4">Hemocyanins are copper-containing oxygen carriers occurring freely dissolved in the hemolymph of many mollusks and arthropods.</text>
</comment>
<comment type="subunit">
    <text evidence="3">36-chain polymer consisting of 6 hexamers, each of which includes 4 different chains, A, B, C and D.</text>
</comment>
<comment type="subcellular location">
    <subcellularLocation>
        <location evidence="3">Secreted</location>
        <location evidence="3">Extracellular space</location>
    </subcellularLocation>
</comment>
<comment type="tissue specificity">
    <text evidence="3">Hemolymph.</text>
</comment>
<comment type="similarity">
    <text evidence="4">Belongs to the tyrosinase family. Hemocyanin subfamily.</text>
</comment>
<reference evidence="4" key="1">
    <citation type="journal article" date="2003" name="Eur. J. Biochem.">
        <title>Complete subunit sequences, structure and evolution of the 6 x 6-mer hemocyanin from the common house centipede, Scutigera coleoptrata.</title>
        <authorList>
            <person name="Kusche K."/>
            <person name="Hembach A."/>
            <person name="Hagner-Holler S."/>
            <person name="Gebauer W."/>
            <person name="Burmester T."/>
        </authorList>
    </citation>
    <scope>NUCLEOTIDE SEQUENCE [MRNA]</scope>
    <scope>SUBUNIT</scope>
    <scope>SUBCELLULAR LOCATION</scope>
    <scope>TISSUE SPECIFICITY</scope>
</reference>
<dbReference type="EMBL" id="AJ431379">
    <property type="protein sequence ID" value="CAD24086.1"/>
    <property type="molecule type" value="mRNA"/>
</dbReference>
<dbReference type="SMR" id="Q8T115"/>
<dbReference type="GlyCosmos" id="Q8T115">
    <property type="glycosylation" value="1 site, No reported glycans"/>
</dbReference>
<dbReference type="GO" id="GO:0005576">
    <property type="term" value="C:extracellular region"/>
    <property type="evidence" value="ECO:0000314"/>
    <property type="project" value="UniProtKB"/>
</dbReference>
<dbReference type="GO" id="GO:0046872">
    <property type="term" value="F:metal ion binding"/>
    <property type="evidence" value="ECO:0007669"/>
    <property type="project" value="UniProtKB-KW"/>
</dbReference>
<dbReference type="GO" id="GO:0016491">
    <property type="term" value="F:oxidoreductase activity"/>
    <property type="evidence" value="ECO:0007669"/>
    <property type="project" value="InterPro"/>
</dbReference>
<dbReference type="GO" id="GO:0005344">
    <property type="term" value="F:oxygen carrier activity"/>
    <property type="evidence" value="ECO:0007669"/>
    <property type="project" value="UniProtKB-KW"/>
</dbReference>
<dbReference type="FunFam" id="1.10.1280.10:FF:000004">
    <property type="entry name" value="Hemocyanin subunit 2"/>
    <property type="match status" value="1"/>
</dbReference>
<dbReference type="FunFam" id="2.60.40.1520:FF:000001">
    <property type="entry name" value="Hemocyanin subunit 2"/>
    <property type="match status" value="1"/>
</dbReference>
<dbReference type="Gene3D" id="1.10.1280.10">
    <property type="entry name" value="Di-copper center containing domain from catechol oxidase"/>
    <property type="match status" value="1"/>
</dbReference>
<dbReference type="Gene3D" id="2.60.40.1520">
    <property type="entry name" value="Hemocyanin, C-terminal domain"/>
    <property type="match status" value="1"/>
</dbReference>
<dbReference type="Gene3D" id="1.20.1370.10">
    <property type="entry name" value="Hemocyanin, N-terminal domain"/>
    <property type="match status" value="1"/>
</dbReference>
<dbReference type="InterPro" id="IPR008922">
    <property type="entry name" value="Di-copper_centre_dom_sf"/>
</dbReference>
<dbReference type="InterPro" id="IPR013788">
    <property type="entry name" value="Hemocyanin/hexamerin"/>
</dbReference>
<dbReference type="InterPro" id="IPR000896">
    <property type="entry name" value="Hemocyanin/hexamerin_mid_dom"/>
</dbReference>
<dbReference type="InterPro" id="IPR005203">
    <property type="entry name" value="Hemocyanin_C"/>
</dbReference>
<dbReference type="InterPro" id="IPR037020">
    <property type="entry name" value="Hemocyanin_C_sf"/>
</dbReference>
<dbReference type="InterPro" id="IPR005204">
    <property type="entry name" value="Hemocyanin_N"/>
</dbReference>
<dbReference type="InterPro" id="IPR036697">
    <property type="entry name" value="Hemocyanin_N_sf"/>
</dbReference>
<dbReference type="InterPro" id="IPR014756">
    <property type="entry name" value="Ig_E-set"/>
</dbReference>
<dbReference type="InterPro" id="IPR002227">
    <property type="entry name" value="Tyrosinase_Cu-bd"/>
</dbReference>
<dbReference type="PANTHER" id="PTHR11511">
    <property type="entry name" value="LARVAL STORAGE PROTEIN/PHENOLOXIDASE"/>
    <property type="match status" value="1"/>
</dbReference>
<dbReference type="PANTHER" id="PTHR11511:SF4">
    <property type="entry name" value="PHENOLOXIDASE 2-RELATED"/>
    <property type="match status" value="1"/>
</dbReference>
<dbReference type="Pfam" id="PF03723">
    <property type="entry name" value="Hemocyanin_C"/>
    <property type="match status" value="1"/>
</dbReference>
<dbReference type="Pfam" id="PF00372">
    <property type="entry name" value="Hemocyanin_M"/>
    <property type="match status" value="1"/>
</dbReference>
<dbReference type="Pfam" id="PF03722">
    <property type="entry name" value="Hemocyanin_N"/>
    <property type="match status" value="1"/>
</dbReference>
<dbReference type="PRINTS" id="PR00187">
    <property type="entry name" value="HAEMOCYANIN"/>
</dbReference>
<dbReference type="SUPFAM" id="SSF48056">
    <property type="entry name" value="Di-copper centre-containing domain"/>
    <property type="match status" value="1"/>
</dbReference>
<dbReference type="SUPFAM" id="SSF81296">
    <property type="entry name" value="E set domains"/>
    <property type="match status" value="1"/>
</dbReference>
<dbReference type="SUPFAM" id="SSF48050">
    <property type="entry name" value="Hemocyanin, N-terminal domain"/>
    <property type="match status" value="1"/>
</dbReference>
<dbReference type="PROSITE" id="PS00209">
    <property type="entry name" value="HEMOCYANIN_1"/>
    <property type="match status" value="1"/>
</dbReference>
<dbReference type="PROSITE" id="PS00210">
    <property type="entry name" value="HEMOCYANIN_2"/>
    <property type="match status" value="1"/>
</dbReference>
<dbReference type="PROSITE" id="PS00498">
    <property type="entry name" value="TYROSINASE_2"/>
    <property type="match status" value="1"/>
</dbReference>
<organism evidence="5">
    <name type="scientific">Scutigera coleoptrata</name>
    <name type="common">House centipede</name>
    <dbReference type="NCBI Taxonomy" id="29022"/>
    <lineage>
        <taxon>Eukaryota</taxon>
        <taxon>Metazoa</taxon>
        <taxon>Ecdysozoa</taxon>
        <taxon>Arthropoda</taxon>
        <taxon>Myriapoda</taxon>
        <taxon>Chilopoda</taxon>
        <taxon>Notostigmophora</taxon>
        <taxon>Scutigeromorpha</taxon>
        <taxon>Scutigeridae</taxon>
        <taxon>Scutigera</taxon>
    </lineage>
</organism>
<name>HCYC_SCUCO</name>
<gene>
    <name type="primary">HCC</name>
    <name type="synonym">HC4</name>
</gene>
<proteinExistence type="evidence at protein level"/>